<accession>Q3AC32</accession>
<reference key="1">
    <citation type="journal article" date="2005" name="PLoS Genet.">
        <title>Life in hot carbon monoxide: the complete genome sequence of Carboxydothermus hydrogenoformans Z-2901.</title>
        <authorList>
            <person name="Wu M."/>
            <person name="Ren Q."/>
            <person name="Durkin A.S."/>
            <person name="Daugherty S.C."/>
            <person name="Brinkac L.M."/>
            <person name="Dodson R.J."/>
            <person name="Madupu R."/>
            <person name="Sullivan S.A."/>
            <person name="Kolonay J.F."/>
            <person name="Nelson W.C."/>
            <person name="Tallon L.J."/>
            <person name="Jones K.M."/>
            <person name="Ulrich L.E."/>
            <person name="Gonzalez J.M."/>
            <person name="Zhulin I.B."/>
            <person name="Robb F.T."/>
            <person name="Eisen J.A."/>
        </authorList>
    </citation>
    <scope>NUCLEOTIDE SEQUENCE [LARGE SCALE GENOMIC DNA]</scope>
    <source>
        <strain>ATCC BAA-161 / DSM 6008 / Z-2901</strain>
    </source>
</reference>
<dbReference type="EMBL" id="CP000141">
    <property type="protein sequence ID" value="ABB14001.1"/>
    <property type="molecule type" value="Genomic_DNA"/>
</dbReference>
<dbReference type="RefSeq" id="WP_011344377.1">
    <property type="nucleotide sequence ID" value="NC_007503.1"/>
</dbReference>
<dbReference type="SMR" id="Q3AC32"/>
<dbReference type="FunCoup" id="Q3AC32">
    <property type="interactions" value="106"/>
</dbReference>
<dbReference type="STRING" id="246194.CHY_1470"/>
<dbReference type="KEGG" id="chy:CHY_1470"/>
<dbReference type="eggNOG" id="COG1281">
    <property type="taxonomic scope" value="Bacteria"/>
</dbReference>
<dbReference type="HOGENOM" id="CLU_054493_1_0_9"/>
<dbReference type="InParanoid" id="Q3AC32"/>
<dbReference type="OrthoDB" id="9776534at2"/>
<dbReference type="Proteomes" id="UP000002706">
    <property type="component" value="Chromosome"/>
</dbReference>
<dbReference type="GO" id="GO:0005737">
    <property type="term" value="C:cytoplasm"/>
    <property type="evidence" value="ECO:0007669"/>
    <property type="project" value="UniProtKB-SubCell"/>
</dbReference>
<dbReference type="GO" id="GO:0044183">
    <property type="term" value="F:protein folding chaperone"/>
    <property type="evidence" value="ECO:0007669"/>
    <property type="project" value="TreeGrafter"/>
</dbReference>
<dbReference type="GO" id="GO:0051082">
    <property type="term" value="F:unfolded protein binding"/>
    <property type="evidence" value="ECO:0007669"/>
    <property type="project" value="UniProtKB-UniRule"/>
</dbReference>
<dbReference type="GO" id="GO:0042026">
    <property type="term" value="P:protein refolding"/>
    <property type="evidence" value="ECO:0007669"/>
    <property type="project" value="TreeGrafter"/>
</dbReference>
<dbReference type="CDD" id="cd00498">
    <property type="entry name" value="Hsp33"/>
    <property type="match status" value="1"/>
</dbReference>
<dbReference type="Gene3D" id="3.55.30.10">
    <property type="entry name" value="Hsp33 domain"/>
    <property type="match status" value="1"/>
</dbReference>
<dbReference type="Gene3D" id="3.90.1280.10">
    <property type="entry name" value="HSP33 redox switch-like"/>
    <property type="match status" value="1"/>
</dbReference>
<dbReference type="HAMAP" id="MF_00117">
    <property type="entry name" value="HslO"/>
    <property type="match status" value="1"/>
</dbReference>
<dbReference type="InterPro" id="IPR000397">
    <property type="entry name" value="Heat_shock_Hsp33"/>
</dbReference>
<dbReference type="InterPro" id="IPR016154">
    <property type="entry name" value="Heat_shock_Hsp33_C"/>
</dbReference>
<dbReference type="InterPro" id="IPR016153">
    <property type="entry name" value="Heat_shock_Hsp33_N"/>
</dbReference>
<dbReference type="NCBIfam" id="NF001033">
    <property type="entry name" value="PRK00114.1"/>
    <property type="match status" value="1"/>
</dbReference>
<dbReference type="PANTHER" id="PTHR30111">
    <property type="entry name" value="33 KDA CHAPERONIN"/>
    <property type="match status" value="1"/>
</dbReference>
<dbReference type="PANTHER" id="PTHR30111:SF1">
    <property type="entry name" value="33 KDA CHAPERONIN"/>
    <property type="match status" value="1"/>
</dbReference>
<dbReference type="Pfam" id="PF01430">
    <property type="entry name" value="HSP33"/>
    <property type="match status" value="1"/>
</dbReference>
<dbReference type="PIRSF" id="PIRSF005261">
    <property type="entry name" value="Heat_shock_Hsp33"/>
    <property type="match status" value="1"/>
</dbReference>
<dbReference type="SUPFAM" id="SSF64397">
    <property type="entry name" value="Hsp33 domain"/>
    <property type="match status" value="1"/>
</dbReference>
<dbReference type="SUPFAM" id="SSF118352">
    <property type="entry name" value="HSP33 redox switch-like"/>
    <property type="match status" value="1"/>
</dbReference>
<sequence length="286" mass="31521">MSDYLVKGMAGEFIRFTGVSSRQTVEEARKRHNLSRLATAALGRALTATIILASDLKNPGDLLTLRIFGDGPLGGIVCSAGNDGMVRGYLFNPEVELPLNDANKLDVGRGIGKGHLYVTKDLGLKEPYTGTVQLVSGEIAEDVAYYLYYSEQRPNVFNLGVLVNPDGSVAQAGGCLIEILPGAPEEIISTLEQNLGEQQSLTYQLQQGKHIEEIIQEVVNPYKTEIYVKKPVGFLCSCSREKLLPHLIGLYSEVKDEEIVEAVCHFCREKYTFSGKEIKEYKEKNT</sequence>
<comment type="function">
    <text evidence="1">Redox regulated molecular chaperone. Protects both thermally unfolding and oxidatively damaged proteins from irreversible aggregation. Plays an important role in the bacterial defense system toward oxidative stress.</text>
</comment>
<comment type="subcellular location">
    <subcellularLocation>
        <location evidence="1">Cytoplasm</location>
    </subcellularLocation>
</comment>
<comment type="PTM">
    <text evidence="1">Under oxidizing conditions two disulfide bonds are formed involving the reactive cysteines. Under reducing conditions zinc is bound to the reactive cysteines and the protein is inactive.</text>
</comment>
<comment type="similarity">
    <text evidence="1">Belongs to the HSP33 family.</text>
</comment>
<name>HSLO_CARHZ</name>
<keyword id="KW-0143">Chaperone</keyword>
<keyword id="KW-0963">Cytoplasm</keyword>
<keyword id="KW-1015">Disulfide bond</keyword>
<keyword id="KW-0676">Redox-active center</keyword>
<keyword id="KW-1185">Reference proteome</keyword>
<keyword id="KW-0862">Zinc</keyword>
<organism>
    <name type="scientific">Carboxydothermus hydrogenoformans (strain ATCC BAA-161 / DSM 6008 / Z-2901)</name>
    <dbReference type="NCBI Taxonomy" id="246194"/>
    <lineage>
        <taxon>Bacteria</taxon>
        <taxon>Bacillati</taxon>
        <taxon>Bacillota</taxon>
        <taxon>Clostridia</taxon>
        <taxon>Thermoanaerobacterales</taxon>
        <taxon>Thermoanaerobacteraceae</taxon>
        <taxon>Carboxydothermus</taxon>
    </lineage>
</organism>
<protein>
    <recommendedName>
        <fullName evidence="1">33 kDa chaperonin</fullName>
    </recommendedName>
    <alternativeName>
        <fullName evidence="1">Heat shock protein 33 homolog</fullName>
        <shortName evidence="1">HSP33</shortName>
    </alternativeName>
</protein>
<evidence type="ECO:0000255" key="1">
    <source>
        <dbReference type="HAMAP-Rule" id="MF_00117"/>
    </source>
</evidence>
<proteinExistence type="inferred from homology"/>
<feature type="chain" id="PRO_0000238063" description="33 kDa chaperonin">
    <location>
        <begin position="1"/>
        <end position="286"/>
    </location>
</feature>
<feature type="disulfide bond" description="Redox-active" evidence="1">
    <location>
        <begin position="236"/>
        <end position="238"/>
    </location>
</feature>
<feature type="disulfide bond" description="Redox-active" evidence="1">
    <location>
        <begin position="264"/>
        <end position="267"/>
    </location>
</feature>
<gene>
    <name evidence="1" type="primary">hslO</name>
    <name type="ordered locus">CHY_1470</name>
</gene>